<protein>
    <recommendedName>
        <fullName>Protein virB4</fullName>
    </recommendedName>
</protein>
<geneLocation type="plasmid">
    <name>pTi15955</name>
</geneLocation>
<gene>
    <name type="primary">virB4</name>
</gene>
<keyword id="KW-0067">ATP-binding</keyword>
<keyword id="KW-0192">Crown gall tumor</keyword>
<keyword id="KW-0547">Nucleotide-binding</keyword>
<keyword id="KW-0614">Plasmid</keyword>
<keyword id="KW-0732">Signal</keyword>
<dbReference type="EMBL" id="X06826">
    <property type="protein sequence ID" value="CAA29975.1"/>
    <property type="molecule type" value="Genomic_DNA"/>
</dbReference>
<dbReference type="PIR" id="A30402">
    <property type="entry name" value="B4AGA6"/>
</dbReference>
<dbReference type="RefSeq" id="NP_059802.1">
    <property type="nucleotide sequence ID" value="NC_002377.1"/>
</dbReference>
<dbReference type="SMR" id="P0A3W1"/>
<dbReference type="GO" id="GO:0005524">
    <property type="term" value="F:ATP binding"/>
    <property type="evidence" value="ECO:0007669"/>
    <property type="project" value="UniProtKB-KW"/>
</dbReference>
<dbReference type="Gene3D" id="3.40.50.300">
    <property type="entry name" value="P-loop containing nucleotide triphosphate hydrolases"/>
    <property type="match status" value="1"/>
</dbReference>
<dbReference type="InterPro" id="IPR004346">
    <property type="entry name" value="CagE_TrbE_VirB"/>
</dbReference>
<dbReference type="InterPro" id="IPR018145">
    <property type="entry name" value="CagE_TrbE_VirB_cntrl_dom"/>
</dbReference>
<dbReference type="InterPro" id="IPR027417">
    <property type="entry name" value="P-loop_NTPase"/>
</dbReference>
<dbReference type="InterPro" id="IPR051162">
    <property type="entry name" value="T4SS_component"/>
</dbReference>
<dbReference type="NCBIfam" id="NF010427">
    <property type="entry name" value="PRK13853.1"/>
    <property type="match status" value="1"/>
</dbReference>
<dbReference type="NCBIfam" id="TIGR00929">
    <property type="entry name" value="VirB4_CagE"/>
    <property type="match status" value="1"/>
</dbReference>
<dbReference type="PANTHER" id="PTHR30121:SF12">
    <property type="entry name" value="TYPE IV SECRETION SYSTEM PROTEIN CAGE"/>
    <property type="match status" value="1"/>
</dbReference>
<dbReference type="PANTHER" id="PTHR30121">
    <property type="entry name" value="UNCHARACTERIZED PROTEIN YJGR-RELATED"/>
    <property type="match status" value="1"/>
</dbReference>
<dbReference type="Pfam" id="PF03135">
    <property type="entry name" value="CagE_TrbE_VirB"/>
    <property type="match status" value="1"/>
</dbReference>
<dbReference type="SUPFAM" id="SSF52540">
    <property type="entry name" value="P-loop containing nucleoside triphosphate hydrolases"/>
    <property type="match status" value="1"/>
</dbReference>
<comment type="function">
    <text>A possible function of virB4 might be to provide the energy, via hydrolysis of ATP, for translocation of virulence proteins of the transfer of a T-DNA-protein complex across the agrobacterium membrane.</text>
</comment>
<comment type="similarity">
    <text evidence="2">Belongs to the TrbE/VirB4 family.</text>
</comment>
<feature type="signal peptide" evidence="1">
    <location>
        <begin position="1"/>
        <end position="38"/>
    </location>
</feature>
<feature type="chain" id="PRO_0000022664" description="Protein virB4">
    <location>
        <begin position="39"/>
        <end position="789"/>
    </location>
</feature>
<feature type="binding site" evidence="1">
    <location>
        <begin position="433"/>
        <end position="440"/>
    </location>
    <ligand>
        <name>ATP</name>
        <dbReference type="ChEBI" id="CHEBI:30616"/>
    </ligand>
</feature>
<sequence>MLGASGTTERSGEIYLPYIGHLSDHIVLLEDGSIMSIARIDGVAFELEEIEMRNARCRAFNTLLRNIADDHVSIYAHLVRHADVPSSAPRHFRSVFAASLNEAFEQRVLSGQLLRNDHFLTLIVYPQAALGKVKRRFTKLSGKRENDLAGQIRNMEDLWHVVAGSLKAYGLHRLGIREKQGVLFTEIGEALRLIMTGRFTPVPVVSGSLGASIYTDRVICGKRGLEIRTPKDSYVGSIYSFREYPAKTRPGMLNALLSLDFPLVLTQSFSFLTRPQAHAKLSLKSSQMLSSGDKAVTQIGKLSEAEDALASNEFVMGSHHLSLCVYADDLNSLGDRGARARTRMADAGAVVVQEGIGMEAAYWSQLPGNFKWRTRPGAITSRNFAGFVSFENFPEGASSGHWGTAIARFRTNGGTPFDYIPHEHDVGMTAIFGPIGRGKTTLMMFVLAMLEQSMVDRAGTVVFFDKDRGGELLVRATGGTYLALRRGTPSGLAPLRGLENTAASHDFLREWIVALIESDGRGGISPEENRRLVRGIHRQLSFDPQMRSIAGLREFLLHGPAEGAGARLQRWCRGHALGWAFDGEVDEVKLDPSITGFDMTHLLEYEEVCAPAAAYLLHRIGAMIDGRRFVMSCDEFRAYLLNPKFSAVVDKFLLTVRKNNGMLILATQQPEHVLESPLGASLVAQCMTKIFYPSPTADRSAYIDGLKCTEKEFQAIREDMTVGSRKFLLKRESGSVICEFDLRDMREYVAVLSGRANTVRFAARLREAQEGNSSGWLSEFMARHHEAED</sequence>
<name>VIRB4_AGRT9</name>
<proteinExistence type="inferred from homology"/>
<evidence type="ECO:0000255" key="1"/>
<evidence type="ECO:0000305" key="2"/>
<accession>P0A3W1</accession>
<accession>P05353</accession>
<accession>P05354</accession>
<accession>P09777</accession>
<reference key="1">
    <citation type="journal article" date="1988" name="Nucleic Acids Res.">
        <title>Analysis of the complete nucleotide sequence of the Agrobacterium tumefaciens virB operon.</title>
        <authorList>
            <person name="Thompson D.V."/>
            <person name="Melchers L.S."/>
            <person name="Idler K.B."/>
            <person name="Shilperoort R.A."/>
            <person name="Hooykaas P.J.J."/>
        </authorList>
    </citation>
    <scope>NUCLEOTIDE SEQUENCE [GENOMIC DNA]</scope>
</reference>
<organism>
    <name type="scientific">Agrobacterium tumefaciens (strain 15955)</name>
    <dbReference type="NCBI Taxonomy" id="190386"/>
    <lineage>
        <taxon>Bacteria</taxon>
        <taxon>Pseudomonadati</taxon>
        <taxon>Pseudomonadota</taxon>
        <taxon>Alphaproteobacteria</taxon>
        <taxon>Hyphomicrobiales</taxon>
        <taxon>Rhizobiaceae</taxon>
        <taxon>Rhizobium/Agrobacterium group</taxon>
        <taxon>Agrobacterium</taxon>
        <taxon>Agrobacterium tumefaciens complex</taxon>
    </lineage>
</organism>